<organism>
    <name type="scientific">Salmonella paratyphi B (strain ATCC BAA-1250 / SPB7)</name>
    <dbReference type="NCBI Taxonomy" id="1016998"/>
    <lineage>
        <taxon>Bacteria</taxon>
        <taxon>Pseudomonadati</taxon>
        <taxon>Pseudomonadota</taxon>
        <taxon>Gammaproteobacteria</taxon>
        <taxon>Enterobacterales</taxon>
        <taxon>Enterobacteriaceae</taxon>
        <taxon>Salmonella</taxon>
    </lineage>
</organism>
<comment type="function">
    <text evidence="1">Binds to the 23S rRNA.</text>
</comment>
<comment type="subunit">
    <text evidence="1">Part of the 50S ribosomal subunit.</text>
</comment>
<comment type="similarity">
    <text evidence="1">Belongs to the universal ribosomal protein uL15 family.</text>
</comment>
<proteinExistence type="inferred from homology"/>
<evidence type="ECO:0000255" key="1">
    <source>
        <dbReference type="HAMAP-Rule" id="MF_01341"/>
    </source>
</evidence>
<evidence type="ECO:0000256" key="2">
    <source>
        <dbReference type="SAM" id="MobiDB-lite"/>
    </source>
</evidence>
<evidence type="ECO:0000305" key="3"/>
<gene>
    <name evidence="1" type="primary">rplO</name>
    <name type="ordered locus">SPAB_04262</name>
</gene>
<protein>
    <recommendedName>
        <fullName evidence="1">Large ribosomal subunit protein uL15</fullName>
    </recommendedName>
    <alternativeName>
        <fullName evidence="3">50S ribosomal protein L15</fullName>
    </alternativeName>
</protein>
<sequence>MRLNTLSPAEGSKKAGKRLGRGIGSGLGKTGGRGHKGQKSRSGGGVRRGFEGGQMPLYRRLPKFGFTSRKAAITAEVRLSDLAKVEGGVVDLNTLKAANIIGIQIEFAKVILAGEVTTPVTVRGLRVTKGARAAIEAAGGKIEE</sequence>
<dbReference type="EMBL" id="CP000886">
    <property type="protein sequence ID" value="ABX69579.1"/>
    <property type="molecule type" value="Genomic_DNA"/>
</dbReference>
<dbReference type="RefSeq" id="WP_001238917.1">
    <property type="nucleotide sequence ID" value="NC_010102.1"/>
</dbReference>
<dbReference type="SMR" id="A9MSX9"/>
<dbReference type="GeneID" id="93778686"/>
<dbReference type="KEGG" id="spq:SPAB_04262"/>
<dbReference type="PATRIC" id="fig|1016998.12.peg.4008"/>
<dbReference type="HOGENOM" id="CLU_055188_4_2_6"/>
<dbReference type="BioCyc" id="SENT1016998:SPAB_RS17340-MONOMER"/>
<dbReference type="Proteomes" id="UP000008556">
    <property type="component" value="Chromosome"/>
</dbReference>
<dbReference type="GO" id="GO:0022625">
    <property type="term" value="C:cytosolic large ribosomal subunit"/>
    <property type="evidence" value="ECO:0007669"/>
    <property type="project" value="TreeGrafter"/>
</dbReference>
<dbReference type="GO" id="GO:0019843">
    <property type="term" value="F:rRNA binding"/>
    <property type="evidence" value="ECO:0007669"/>
    <property type="project" value="UniProtKB-UniRule"/>
</dbReference>
<dbReference type="GO" id="GO:0003735">
    <property type="term" value="F:structural constituent of ribosome"/>
    <property type="evidence" value="ECO:0007669"/>
    <property type="project" value="InterPro"/>
</dbReference>
<dbReference type="GO" id="GO:0006412">
    <property type="term" value="P:translation"/>
    <property type="evidence" value="ECO:0007669"/>
    <property type="project" value="UniProtKB-UniRule"/>
</dbReference>
<dbReference type="FunFam" id="3.100.10.10:FF:000003">
    <property type="entry name" value="50S ribosomal protein L15"/>
    <property type="match status" value="1"/>
</dbReference>
<dbReference type="Gene3D" id="3.100.10.10">
    <property type="match status" value="1"/>
</dbReference>
<dbReference type="HAMAP" id="MF_01341">
    <property type="entry name" value="Ribosomal_uL15"/>
    <property type="match status" value="1"/>
</dbReference>
<dbReference type="InterPro" id="IPR030878">
    <property type="entry name" value="Ribosomal_uL15"/>
</dbReference>
<dbReference type="InterPro" id="IPR021131">
    <property type="entry name" value="Ribosomal_uL15/eL18"/>
</dbReference>
<dbReference type="InterPro" id="IPR036227">
    <property type="entry name" value="Ribosomal_uL15/eL18_sf"/>
</dbReference>
<dbReference type="InterPro" id="IPR005749">
    <property type="entry name" value="Ribosomal_uL15_bac-type"/>
</dbReference>
<dbReference type="InterPro" id="IPR001196">
    <property type="entry name" value="Ribosomal_uL15_CS"/>
</dbReference>
<dbReference type="NCBIfam" id="TIGR01071">
    <property type="entry name" value="rplO_bact"/>
    <property type="match status" value="1"/>
</dbReference>
<dbReference type="PANTHER" id="PTHR12934">
    <property type="entry name" value="50S RIBOSOMAL PROTEIN L15"/>
    <property type="match status" value="1"/>
</dbReference>
<dbReference type="PANTHER" id="PTHR12934:SF11">
    <property type="entry name" value="LARGE RIBOSOMAL SUBUNIT PROTEIN UL15M"/>
    <property type="match status" value="1"/>
</dbReference>
<dbReference type="Pfam" id="PF00828">
    <property type="entry name" value="Ribosomal_L27A"/>
    <property type="match status" value="1"/>
</dbReference>
<dbReference type="SUPFAM" id="SSF52080">
    <property type="entry name" value="Ribosomal proteins L15p and L18e"/>
    <property type="match status" value="1"/>
</dbReference>
<dbReference type="PROSITE" id="PS00475">
    <property type="entry name" value="RIBOSOMAL_L15"/>
    <property type="match status" value="1"/>
</dbReference>
<reference key="1">
    <citation type="submission" date="2007-11" db="EMBL/GenBank/DDBJ databases">
        <authorList>
            <consortium name="The Salmonella enterica serovar Paratyphi B Genome Sequencing Project"/>
            <person name="McClelland M."/>
            <person name="Sanderson E.K."/>
            <person name="Porwollik S."/>
            <person name="Spieth J."/>
            <person name="Clifton W.S."/>
            <person name="Fulton R."/>
            <person name="Cordes M."/>
            <person name="Wollam A."/>
            <person name="Shah N."/>
            <person name="Pepin K."/>
            <person name="Bhonagiri V."/>
            <person name="Nash W."/>
            <person name="Johnson M."/>
            <person name="Thiruvilangam P."/>
            <person name="Wilson R."/>
        </authorList>
    </citation>
    <scope>NUCLEOTIDE SEQUENCE [LARGE SCALE GENOMIC DNA]</scope>
    <source>
        <strain>ATCC BAA-1250 / SPB7</strain>
    </source>
</reference>
<name>RL15_SALPB</name>
<feature type="chain" id="PRO_1000086728" description="Large ribosomal subunit protein uL15">
    <location>
        <begin position="1"/>
        <end position="144"/>
    </location>
</feature>
<feature type="region of interest" description="Disordered" evidence="2">
    <location>
        <begin position="1"/>
        <end position="54"/>
    </location>
</feature>
<feature type="compositionally biased region" description="Gly residues" evidence="2">
    <location>
        <begin position="21"/>
        <end position="31"/>
    </location>
</feature>
<keyword id="KW-0687">Ribonucleoprotein</keyword>
<keyword id="KW-0689">Ribosomal protein</keyword>
<keyword id="KW-0694">RNA-binding</keyword>
<keyword id="KW-0699">rRNA-binding</keyword>
<accession>A9MSX9</accession>